<protein>
    <recommendedName>
        <fullName evidence="1">ATP synthase subunit a</fullName>
    </recommendedName>
    <alternativeName>
        <fullName evidence="1">ATP synthase F0 sector subunit a</fullName>
    </alternativeName>
    <alternativeName>
        <fullName evidence="1">F-ATPase subunit 6</fullName>
    </alternativeName>
</protein>
<proteinExistence type="inferred from homology"/>
<evidence type="ECO:0000255" key="1">
    <source>
        <dbReference type="HAMAP-Rule" id="MF_01393"/>
    </source>
</evidence>
<gene>
    <name evidence="1" type="primary">atpB</name>
    <name type="ordered locus">EcSMS35_4106</name>
</gene>
<reference key="1">
    <citation type="journal article" date="2008" name="J. Bacteriol.">
        <title>Insights into the environmental resistance gene pool from the genome sequence of the multidrug-resistant environmental isolate Escherichia coli SMS-3-5.</title>
        <authorList>
            <person name="Fricke W.F."/>
            <person name="Wright M.S."/>
            <person name="Lindell A.H."/>
            <person name="Harkins D.M."/>
            <person name="Baker-Austin C."/>
            <person name="Ravel J."/>
            <person name="Stepanauskas R."/>
        </authorList>
    </citation>
    <scope>NUCLEOTIDE SEQUENCE [LARGE SCALE GENOMIC DNA]</scope>
    <source>
        <strain>SMS-3-5 / SECEC</strain>
    </source>
</reference>
<accession>B1LL65</accession>
<organism>
    <name type="scientific">Escherichia coli (strain SMS-3-5 / SECEC)</name>
    <dbReference type="NCBI Taxonomy" id="439855"/>
    <lineage>
        <taxon>Bacteria</taxon>
        <taxon>Pseudomonadati</taxon>
        <taxon>Pseudomonadota</taxon>
        <taxon>Gammaproteobacteria</taxon>
        <taxon>Enterobacterales</taxon>
        <taxon>Enterobacteriaceae</taxon>
        <taxon>Escherichia</taxon>
    </lineage>
</organism>
<dbReference type="EMBL" id="CP000970">
    <property type="protein sequence ID" value="ACB17796.1"/>
    <property type="molecule type" value="Genomic_DNA"/>
</dbReference>
<dbReference type="RefSeq" id="WP_000135618.1">
    <property type="nucleotide sequence ID" value="NC_010498.1"/>
</dbReference>
<dbReference type="BMRB" id="B1LL65"/>
<dbReference type="SMR" id="B1LL65"/>
<dbReference type="GeneID" id="86948620"/>
<dbReference type="KEGG" id="ecm:EcSMS35_4106"/>
<dbReference type="HOGENOM" id="CLU_041018_1_0_6"/>
<dbReference type="Proteomes" id="UP000007011">
    <property type="component" value="Chromosome"/>
</dbReference>
<dbReference type="GO" id="GO:0005886">
    <property type="term" value="C:plasma membrane"/>
    <property type="evidence" value="ECO:0007669"/>
    <property type="project" value="UniProtKB-SubCell"/>
</dbReference>
<dbReference type="GO" id="GO:0045259">
    <property type="term" value="C:proton-transporting ATP synthase complex"/>
    <property type="evidence" value="ECO:0007669"/>
    <property type="project" value="UniProtKB-KW"/>
</dbReference>
<dbReference type="GO" id="GO:0046933">
    <property type="term" value="F:proton-transporting ATP synthase activity, rotational mechanism"/>
    <property type="evidence" value="ECO:0007669"/>
    <property type="project" value="UniProtKB-UniRule"/>
</dbReference>
<dbReference type="GO" id="GO:0042777">
    <property type="term" value="P:proton motive force-driven plasma membrane ATP synthesis"/>
    <property type="evidence" value="ECO:0007669"/>
    <property type="project" value="TreeGrafter"/>
</dbReference>
<dbReference type="CDD" id="cd00310">
    <property type="entry name" value="ATP-synt_Fo_a_6"/>
    <property type="match status" value="1"/>
</dbReference>
<dbReference type="FunFam" id="1.20.120.220:FF:000002">
    <property type="entry name" value="ATP synthase subunit a"/>
    <property type="match status" value="1"/>
</dbReference>
<dbReference type="Gene3D" id="1.20.120.220">
    <property type="entry name" value="ATP synthase, F0 complex, subunit A"/>
    <property type="match status" value="1"/>
</dbReference>
<dbReference type="HAMAP" id="MF_01393">
    <property type="entry name" value="ATP_synth_a_bact"/>
    <property type="match status" value="1"/>
</dbReference>
<dbReference type="InterPro" id="IPR045082">
    <property type="entry name" value="ATP_syn_F0_a_bact/chloroplast"/>
</dbReference>
<dbReference type="InterPro" id="IPR000568">
    <property type="entry name" value="ATP_synth_F0_asu"/>
</dbReference>
<dbReference type="InterPro" id="IPR023011">
    <property type="entry name" value="ATP_synth_F0_asu_AS"/>
</dbReference>
<dbReference type="InterPro" id="IPR035908">
    <property type="entry name" value="F0_ATP_A_sf"/>
</dbReference>
<dbReference type="NCBIfam" id="TIGR01131">
    <property type="entry name" value="ATP_synt_6_or_A"/>
    <property type="match status" value="1"/>
</dbReference>
<dbReference type="NCBIfam" id="NF004477">
    <property type="entry name" value="PRK05815.1-1"/>
    <property type="match status" value="1"/>
</dbReference>
<dbReference type="PANTHER" id="PTHR42823">
    <property type="entry name" value="ATP SYNTHASE SUBUNIT A, CHLOROPLASTIC"/>
    <property type="match status" value="1"/>
</dbReference>
<dbReference type="PANTHER" id="PTHR42823:SF3">
    <property type="entry name" value="ATP SYNTHASE SUBUNIT A, CHLOROPLASTIC"/>
    <property type="match status" value="1"/>
</dbReference>
<dbReference type="Pfam" id="PF00119">
    <property type="entry name" value="ATP-synt_A"/>
    <property type="match status" value="1"/>
</dbReference>
<dbReference type="PRINTS" id="PR00123">
    <property type="entry name" value="ATPASEA"/>
</dbReference>
<dbReference type="SUPFAM" id="SSF81336">
    <property type="entry name" value="F1F0 ATP synthase subunit A"/>
    <property type="match status" value="1"/>
</dbReference>
<dbReference type="PROSITE" id="PS00449">
    <property type="entry name" value="ATPASE_A"/>
    <property type="match status" value="1"/>
</dbReference>
<comment type="function">
    <text evidence="1">Key component of the proton channel; it plays a direct role in the translocation of protons across the membrane.</text>
</comment>
<comment type="subunit">
    <text evidence="1">F-type ATPases have 2 components, CF(1) - the catalytic core - and CF(0) - the membrane proton channel. CF(1) has five subunits: alpha(3), beta(3), gamma(1), delta(1), epsilon(1). CF(0) has three main subunits: a(1), b(2) and c(9-12). The alpha and beta chains form an alternating ring which encloses part of the gamma chain. CF(1) is attached to CF(0) by a central stalk formed by the gamma and epsilon chains, while a peripheral stalk is formed by the delta and b chains.</text>
</comment>
<comment type="subcellular location">
    <subcellularLocation>
        <location evidence="1">Cell inner membrane</location>
        <topology evidence="1">Multi-pass membrane protein</topology>
    </subcellularLocation>
</comment>
<comment type="similarity">
    <text evidence="1">Belongs to the ATPase A chain family.</text>
</comment>
<sequence>MASENMTPQDYIGHHLNNLQLDLRTFSLVDPHNPPATFWTINIDSMFFSVVLGLLFLVLFRSVAKKATSGVPGKFQTAIELVIGFVNGSVKDMYHGKSKLIAPLALTIFVWVFLMNLMDLLPIDLLPYIAEHVLGLPALRVVPSADVNVTLSMALGVFILILFYSIKMKGIGGFTKELTLQPFNHWAFIPVNLILEGVSLLSKPVSLGLRLFGNMYAGELIFILIAGLLPWWSQWILNVPWAIFHILIITLQAFIFMVLTIVYLSMASEEH</sequence>
<name>ATP6_ECOSM</name>
<keyword id="KW-0066">ATP synthesis</keyword>
<keyword id="KW-0997">Cell inner membrane</keyword>
<keyword id="KW-1003">Cell membrane</keyword>
<keyword id="KW-0138">CF(0)</keyword>
<keyword id="KW-0375">Hydrogen ion transport</keyword>
<keyword id="KW-0406">Ion transport</keyword>
<keyword id="KW-0472">Membrane</keyword>
<keyword id="KW-0812">Transmembrane</keyword>
<keyword id="KW-1133">Transmembrane helix</keyword>
<keyword id="KW-0813">Transport</keyword>
<feature type="chain" id="PRO_0000362301" description="ATP synthase subunit a">
    <location>
        <begin position="1"/>
        <end position="271"/>
    </location>
</feature>
<feature type="transmembrane region" description="Helical" evidence="1">
    <location>
        <begin position="40"/>
        <end position="60"/>
    </location>
</feature>
<feature type="transmembrane region" description="Helical" evidence="1">
    <location>
        <begin position="100"/>
        <end position="120"/>
    </location>
</feature>
<feature type="transmembrane region" description="Helical" evidence="1">
    <location>
        <begin position="146"/>
        <end position="166"/>
    </location>
</feature>
<feature type="transmembrane region" description="Helical" evidence="1">
    <location>
        <begin position="220"/>
        <end position="240"/>
    </location>
</feature>
<feature type="transmembrane region" description="Helical" evidence="1">
    <location>
        <begin position="242"/>
        <end position="262"/>
    </location>
</feature>